<protein>
    <recommendedName>
        <fullName evidence="1">Lipid-A-disaccharide synthase</fullName>
        <ecNumber evidence="1">2.4.1.182</ecNumber>
    </recommendedName>
</protein>
<feature type="chain" id="PRO_0000190155" description="Lipid-A-disaccharide synthase">
    <location>
        <begin position="1"/>
        <end position="392"/>
    </location>
</feature>
<dbReference type="EC" id="2.4.1.182" evidence="1"/>
<dbReference type="EMBL" id="BA000040">
    <property type="protein sequence ID" value="BAC50112.1"/>
    <property type="molecule type" value="Genomic_DNA"/>
</dbReference>
<dbReference type="RefSeq" id="NP_771487.1">
    <property type="nucleotide sequence ID" value="NC_004463.1"/>
</dbReference>
<dbReference type="RefSeq" id="WP_011087615.1">
    <property type="nucleotide sequence ID" value="NC_004463.1"/>
</dbReference>
<dbReference type="SMR" id="Q89KQ7"/>
<dbReference type="FunCoup" id="Q89KQ7">
    <property type="interactions" value="346"/>
</dbReference>
<dbReference type="STRING" id="224911.AAV28_21545"/>
<dbReference type="CAZy" id="GT19">
    <property type="family name" value="Glycosyltransferase Family 19"/>
</dbReference>
<dbReference type="EnsemblBacteria" id="BAC50112">
    <property type="protein sequence ID" value="BAC50112"/>
    <property type="gene ID" value="BAC50112"/>
</dbReference>
<dbReference type="GeneID" id="46491850"/>
<dbReference type="KEGG" id="bja:bll4847"/>
<dbReference type="PATRIC" id="fig|224911.5.peg.4927"/>
<dbReference type="eggNOG" id="COG0763">
    <property type="taxonomic scope" value="Bacteria"/>
</dbReference>
<dbReference type="HOGENOM" id="CLU_036577_3_0_5"/>
<dbReference type="InParanoid" id="Q89KQ7"/>
<dbReference type="OrthoDB" id="9801642at2"/>
<dbReference type="PhylomeDB" id="Q89KQ7"/>
<dbReference type="UniPathway" id="UPA00973"/>
<dbReference type="Proteomes" id="UP000002526">
    <property type="component" value="Chromosome"/>
</dbReference>
<dbReference type="GO" id="GO:0016020">
    <property type="term" value="C:membrane"/>
    <property type="evidence" value="ECO:0007669"/>
    <property type="project" value="GOC"/>
</dbReference>
<dbReference type="GO" id="GO:0008915">
    <property type="term" value="F:lipid-A-disaccharide synthase activity"/>
    <property type="evidence" value="ECO:0007669"/>
    <property type="project" value="UniProtKB-UniRule"/>
</dbReference>
<dbReference type="GO" id="GO:0005543">
    <property type="term" value="F:phospholipid binding"/>
    <property type="evidence" value="ECO:0000318"/>
    <property type="project" value="GO_Central"/>
</dbReference>
<dbReference type="GO" id="GO:0009245">
    <property type="term" value="P:lipid A biosynthetic process"/>
    <property type="evidence" value="ECO:0000318"/>
    <property type="project" value="GO_Central"/>
</dbReference>
<dbReference type="HAMAP" id="MF_00392">
    <property type="entry name" value="LpxB"/>
    <property type="match status" value="1"/>
</dbReference>
<dbReference type="InterPro" id="IPR003835">
    <property type="entry name" value="Glyco_trans_19"/>
</dbReference>
<dbReference type="NCBIfam" id="TIGR00215">
    <property type="entry name" value="lpxB"/>
    <property type="match status" value="1"/>
</dbReference>
<dbReference type="PANTHER" id="PTHR30372">
    <property type="entry name" value="LIPID-A-DISACCHARIDE SYNTHASE"/>
    <property type="match status" value="1"/>
</dbReference>
<dbReference type="PANTHER" id="PTHR30372:SF4">
    <property type="entry name" value="LIPID-A-DISACCHARIDE SYNTHASE, MITOCHONDRIAL-RELATED"/>
    <property type="match status" value="1"/>
</dbReference>
<dbReference type="Pfam" id="PF02684">
    <property type="entry name" value="LpxB"/>
    <property type="match status" value="1"/>
</dbReference>
<dbReference type="SUPFAM" id="SSF53756">
    <property type="entry name" value="UDP-Glycosyltransferase/glycogen phosphorylase"/>
    <property type="match status" value="1"/>
</dbReference>
<name>LPXB_BRADU</name>
<sequence>MMQGRDPKRKIFLIATEESGDRLGSALMKVLRQRLGDGVQFEGVGGRTMAREGLETLFPIEELSIVGFAAVVQQLPKILRLIRETADAVLEAVPDALVIIDSPDFTHRVARRVRARNPAIPIVDYVSPQLWAWRPGRARTMLGYVDHVLGLLPFEPEEYRKLGGPPCSYVGHPLIEQLGSLRPNAEEQKRRNSELPVLLVLPGSRRSEIRHHIEVFGAALGRLQAEGRAFELMLPTMPHLEATVREGIASWPVKPQIVIGEAEKRAAFRIAHAALAKSGTVTLELALSGIPMVTAYRVGAIEAFILRRAIRVSSVILANLVIGEDVIPEFLQEDCTPEKLAPALSEVLTDSDMRRRQVEAFARLDTIMSTGNKAPSVLAADIVLATMRKGRR</sequence>
<organism>
    <name type="scientific">Bradyrhizobium diazoefficiens (strain JCM 10833 / BCRC 13528 / IAM 13628 / NBRC 14792 / USDA 110)</name>
    <dbReference type="NCBI Taxonomy" id="224911"/>
    <lineage>
        <taxon>Bacteria</taxon>
        <taxon>Pseudomonadati</taxon>
        <taxon>Pseudomonadota</taxon>
        <taxon>Alphaproteobacteria</taxon>
        <taxon>Hyphomicrobiales</taxon>
        <taxon>Nitrobacteraceae</taxon>
        <taxon>Bradyrhizobium</taxon>
    </lineage>
</organism>
<keyword id="KW-0328">Glycosyltransferase</keyword>
<keyword id="KW-0441">Lipid A biosynthesis</keyword>
<keyword id="KW-0444">Lipid biosynthesis</keyword>
<keyword id="KW-0443">Lipid metabolism</keyword>
<keyword id="KW-1185">Reference proteome</keyword>
<keyword id="KW-0808">Transferase</keyword>
<accession>Q89KQ7</accession>
<evidence type="ECO:0000255" key="1">
    <source>
        <dbReference type="HAMAP-Rule" id="MF_00392"/>
    </source>
</evidence>
<comment type="function">
    <text evidence="1">Condensation of UDP-2,3-diacylglucosamine and 2,3-diacylglucosamine-1-phosphate to form lipid A disaccharide, a precursor of lipid A, a phosphorylated glycolipid that anchors the lipopolysaccharide to the outer membrane of the cell.</text>
</comment>
<comment type="catalytic activity">
    <reaction evidence="1">
        <text>a lipid X + a UDP-2-N,3-O-bis[(3R)-3-hydroxyacyl]-alpha-D-glucosamine = a lipid A disaccharide + UDP + H(+)</text>
        <dbReference type="Rhea" id="RHEA:67828"/>
        <dbReference type="ChEBI" id="CHEBI:15378"/>
        <dbReference type="ChEBI" id="CHEBI:58223"/>
        <dbReference type="ChEBI" id="CHEBI:137748"/>
        <dbReference type="ChEBI" id="CHEBI:176338"/>
        <dbReference type="ChEBI" id="CHEBI:176343"/>
        <dbReference type="EC" id="2.4.1.182"/>
    </reaction>
</comment>
<comment type="pathway">
    <text evidence="1">Bacterial outer membrane biogenesis; LPS lipid A biosynthesis.</text>
</comment>
<comment type="similarity">
    <text evidence="1">Belongs to the LpxB family.</text>
</comment>
<proteinExistence type="inferred from homology"/>
<gene>
    <name evidence="1" type="primary">lpxB</name>
    <name type="ordered locus">bll4847</name>
</gene>
<reference key="1">
    <citation type="journal article" date="2002" name="DNA Res.">
        <title>Complete genomic sequence of nitrogen-fixing symbiotic bacterium Bradyrhizobium japonicum USDA110.</title>
        <authorList>
            <person name="Kaneko T."/>
            <person name="Nakamura Y."/>
            <person name="Sato S."/>
            <person name="Minamisawa K."/>
            <person name="Uchiumi T."/>
            <person name="Sasamoto S."/>
            <person name="Watanabe A."/>
            <person name="Idesawa K."/>
            <person name="Iriguchi M."/>
            <person name="Kawashima K."/>
            <person name="Kohara M."/>
            <person name="Matsumoto M."/>
            <person name="Shimpo S."/>
            <person name="Tsuruoka H."/>
            <person name="Wada T."/>
            <person name="Yamada M."/>
            <person name="Tabata S."/>
        </authorList>
    </citation>
    <scope>NUCLEOTIDE SEQUENCE [LARGE SCALE GENOMIC DNA]</scope>
    <source>
        <strain>JCM 10833 / BCRC 13528 / IAM 13628 / NBRC 14792 / USDA 110</strain>
    </source>
</reference>